<keyword id="KW-0025">Alternative splicing</keyword>
<keyword id="KW-0175">Coiled coil</keyword>
<keyword id="KW-0343">GTPase activation</keyword>
<keyword id="KW-0597">Phosphoprotein</keyword>
<keyword id="KW-1267">Proteomics identification</keyword>
<keyword id="KW-1185">Reference proteome</keyword>
<name>EVI5L_HUMAN</name>
<proteinExistence type="evidence at protein level"/>
<evidence type="ECO:0000250" key="1"/>
<evidence type="ECO:0000255" key="2"/>
<evidence type="ECO:0000255" key="3">
    <source>
        <dbReference type="PROSITE-ProRule" id="PRU00163"/>
    </source>
</evidence>
<evidence type="ECO:0000256" key="4">
    <source>
        <dbReference type="SAM" id="MobiDB-lite"/>
    </source>
</evidence>
<evidence type="ECO:0000269" key="5">
    <source>
    </source>
</evidence>
<evidence type="ECO:0000303" key="6">
    <source>
    </source>
</evidence>
<evidence type="ECO:0007744" key="7">
    <source>
    </source>
</evidence>
<comment type="function">
    <text evidence="5">Functions as a GTPase-activating protein (GAP) with a broad specificity.</text>
</comment>
<comment type="subunit">
    <text>May interact with RAB10.</text>
</comment>
<comment type="interaction">
    <interactant intactId="EBI-749523">
        <id>Q96CN4</id>
    </interactant>
    <interactant intactId="EBI-14100900">
        <id>A1A5B0</id>
        <label>ANKRD36</label>
    </interactant>
    <organismsDiffer>false</organismsDiffer>
    <experiments>3</experiments>
</comment>
<comment type="interaction">
    <interactant intactId="EBI-749523">
        <id>Q96CN4</id>
    </interactant>
    <interactant intactId="EBI-541426">
        <id>Q9BXS5</id>
        <label>AP1M1</label>
    </interactant>
    <organismsDiffer>false</organismsDiffer>
    <experiments>3</experiments>
</comment>
<comment type="interaction">
    <interactant intactId="EBI-749523">
        <id>Q96CN4</id>
    </interactant>
    <interactant intactId="EBI-740814">
        <id>Q8N715</id>
        <label>CCDC185</label>
    </interactant>
    <organismsDiffer>false</organismsDiffer>
    <experiments>3</experiments>
</comment>
<comment type="interaction">
    <interactant intactId="EBI-749523">
        <id>Q96CN4</id>
    </interactant>
    <interactant intactId="EBI-1052570">
        <id>O95995</id>
        <label>GAS8</label>
    </interactant>
    <organismsDiffer>false</organismsDiffer>
    <experiments>3</experiments>
</comment>
<comment type="interaction">
    <interactant intactId="EBI-749523">
        <id>Q96CN4</id>
    </interactant>
    <interactant intactId="EBI-2514135">
        <id>Q5XKE5</id>
        <label>KRT79</label>
    </interactant>
    <organismsDiffer>false</organismsDiffer>
    <experiments>3</experiments>
</comment>
<comment type="interaction">
    <interactant intactId="EBI-749523">
        <id>Q96CN4</id>
    </interactant>
    <interactant intactId="EBI-739832">
        <id>Q8TBB1</id>
        <label>LNX1</label>
    </interactant>
    <organismsDiffer>false</organismsDiffer>
    <experiments>3</experiments>
</comment>
<comment type="interaction">
    <interactant intactId="EBI-749523">
        <id>Q96CN4</id>
    </interactant>
    <interactant intactId="EBI-740486">
        <id>Q6ZVK8</id>
        <label>NUDT18</label>
    </interactant>
    <organismsDiffer>false</organismsDiffer>
    <experiments>3</experiments>
</comment>
<comment type="interaction">
    <interactant intactId="EBI-749523">
        <id>Q96CN4</id>
    </interactant>
    <interactant intactId="EBI-2798416">
        <id>Q99633</id>
        <label>PRPF18</label>
    </interactant>
    <organismsDiffer>false</organismsDiffer>
    <experiments>3</experiments>
</comment>
<comment type="interaction">
    <interactant intactId="EBI-749523">
        <id>Q96CN4</id>
    </interactant>
    <interactant intactId="EBI-746903">
        <id>Q9Y580</id>
        <label>RBM7</label>
    </interactant>
    <organismsDiffer>false</organismsDiffer>
    <experiments>3</experiments>
</comment>
<comment type="interaction">
    <interactant intactId="EBI-749523">
        <id>Q96CN4</id>
    </interactant>
    <interactant intactId="EBI-12018146">
        <id>Q8IYX1</id>
        <label>TBC1D21</label>
    </interactant>
    <organismsDiffer>false</organismsDiffer>
    <experiments>3</experiments>
</comment>
<comment type="interaction">
    <interactant intactId="EBI-749523">
        <id>Q96CN4</id>
    </interactant>
    <interactant intactId="EBI-11985915">
        <id>Q5T619</id>
        <label>ZNF648</label>
    </interactant>
    <organismsDiffer>false</organismsDiffer>
    <experiments>3</experiments>
</comment>
<comment type="alternative products">
    <event type="alternative splicing"/>
    <isoform>
        <id>Q96CN4-1</id>
        <name>1</name>
        <sequence type="displayed"/>
    </isoform>
    <isoform>
        <id>Q96CN4-2</id>
        <name>2</name>
        <sequence type="described" ref="VSP_043456"/>
    </isoform>
</comment>
<comment type="domain">
    <text evidence="1">The arginine and glutamine fingers are critical for the GTPase-activating mechanism, they pull out Rab's 'switch 2' glutamine and insert in Rab's active site.</text>
</comment>
<reference key="1">
    <citation type="journal article" date="2009" name="Genes Cells">
        <title>Identification and characterization of a novel Tre-2/Bub2/Cdc16 (TBC) protein that possesses Rab3A-GAP activity.</title>
        <authorList>
            <person name="Ishibashi K."/>
            <person name="Kanno E."/>
            <person name="Itoh T."/>
            <person name="Fukuda M."/>
        </authorList>
    </citation>
    <scope>NUCLEOTIDE SEQUENCE [MRNA] (ISOFORM 2)</scope>
    <source>
        <tissue>Brain</tissue>
    </source>
</reference>
<reference key="2">
    <citation type="journal article" date="2004" name="Nature">
        <title>The DNA sequence and biology of human chromosome 19.</title>
        <authorList>
            <person name="Grimwood J."/>
            <person name="Gordon L.A."/>
            <person name="Olsen A.S."/>
            <person name="Terry A."/>
            <person name="Schmutz J."/>
            <person name="Lamerdin J.E."/>
            <person name="Hellsten U."/>
            <person name="Goodstein D."/>
            <person name="Couronne O."/>
            <person name="Tran-Gyamfi M."/>
            <person name="Aerts A."/>
            <person name="Altherr M."/>
            <person name="Ashworth L."/>
            <person name="Bajorek E."/>
            <person name="Black S."/>
            <person name="Branscomb E."/>
            <person name="Caenepeel S."/>
            <person name="Carrano A.V."/>
            <person name="Caoile C."/>
            <person name="Chan Y.M."/>
            <person name="Christensen M."/>
            <person name="Cleland C.A."/>
            <person name="Copeland A."/>
            <person name="Dalin E."/>
            <person name="Dehal P."/>
            <person name="Denys M."/>
            <person name="Detter J.C."/>
            <person name="Escobar J."/>
            <person name="Flowers D."/>
            <person name="Fotopulos D."/>
            <person name="Garcia C."/>
            <person name="Georgescu A.M."/>
            <person name="Glavina T."/>
            <person name="Gomez M."/>
            <person name="Gonzales E."/>
            <person name="Groza M."/>
            <person name="Hammon N."/>
            <person name="Hawkins T."/>
            <person name="Haydu L."/>
            <person name="Ho I."/>
            <person name="Huang W."/>
            <person name="Israni S."/>
            <person name="Jett J."/>
            <person name="Kadner K."/>
            <person name="Kimball H."/>
            <person name="Kobayashi A."/>
            <person name="Larionov V."/>
            <person name="Leem S.-H."/>
            <person name="Lopez F."/>
            <person name="Lou Y."/>
            <person name="Lowry S."/>
            <person name="Malfatti S."/>
            <person name="Martinez D."/>
            <person name="McCready P.M."/>
            <person name="Medina C."/>
            <person name="Morgan J."/>
            <person name="Nelson K."/>
            <person name="Nolan M."/>
            <person name="Ovcharenko I."/>
            <person name="Pitluck S."/>
            <person name="Pollard M."/>
            <person name="Popkie A.P."/>
            <person name="Predki P."/>
            <person name="Quan G."/>
            <person name="Ramirez L."/>
            <person name="Rash S."/>
            <person name="Retterer J."/>
            <person name="Rodriguez A."/>
            <person name="Rogers S."/>
            <person name="Salamov A."/>
            <person name="Salazar A."/>
            <person name="She X."/>
            <person name="Smith D."/>
            <person name="Slezak T."/>
            <person name="Solovyev V."/>
            <person name="Thayer N."/>
            <person name="Tice H."/>
            <person name="Tsai M."/>
            <person name="Ustaszewska A."/>
            <person name="Vo N."/>
            <person name="Wagner M."/>
            <person name="Wheeler J."/>
            <person name="Wu K."/>
            <person name="Xie G."/>
            <person name="Yang J."/>
            <person name="Dubchak I."/>
            <person name="Furey T.S."/>
            <person name="DeJong P."/>
            <person name="Dickson M."/>
            <person name="Gordon D."/>
            <person name="Eichler E.E."/>
            <person name="Pennacchio L.A."/>
            <person name="Richardson P."/>
            <person name="Stubbs L."/>
            <person name="Rokhsar D.S."/>
            <person name="Myers R.M."/>
            <person name="Rubin E.M."/>
            <person name="Lucas S.M."/>
        </authorList>
    </citation>
    <scope>NUCLEOTIDE SEQUENCE [LARGE SCALE GENOMIC DNA]</scope>
</reference>
<reference key="3">
    <citation type="journal article" date="2004" name="Genome Res.">
        <title>The status, quality, and expansion of the NIH full-length cDNA project: the Mammalian Gene Collection (MGC).</title>
        <authorList>
            <consortium name="The MGC Project Team"/>
        </authorList>
    </citation>
    <scope>NUCLEOTIDE SEQUENCE [LARGE SCALE MRNA] (ISOFORM 1)</scope>
    <source>
        <tissue>Placenta</tissue>
    </source>
</reference>
<reference key="4">
    <citation type="journal article" date="2006" name="Genes Cells">
        <title>Screening for target Rabs of TBC (Tre-2/Bub2/Cdc16) domain-containing proteins based on their Rab-binding activity.</title>
        <authorList>
            <person name="Itoh T."/>
            <person name="Satoh M."/>
            <person name="Kanno E."/>
            <person name="Fukuda M."/>
        </authorList>
    </citation>
    <scope>FUNCTION</scope>
    <scope>INTERACTION WITH RAB10</scope>
</reference>
<reference key="5">
    <citation type="journal article" date="2013" name="J. Proteome Res.">
        <title>Toward a comprehensive characterization of a human cancer cell phosphoproteome.</title>
        <authorList>
            <person name="Zhou H."/>
            <person name="Di Palma S."/>
            <person name="Preisinger C."/>
            <person name="Peng M."/>
            <person name="Polat A.N."/>
            <person name="Heck A.J."/>
            <person name="Mohammed S."/>
        </authorList>
    </citation>
    <scope>PHOSPHORYLATION [LARGE SCALE ANALYSIS] AT SER-685</scope>
    <scope>IDENTIFICATION BY MASS SPECTROMETRY [LARGE SCALE ANALYSIS]</scope>
    <source>
        <tissue>Erythroleukemia</tissue>
    </source>
</reference>
<reference key="6">
    <citation type="journal article" date="2014" name="J. Proteomics">
        <title>An enzyme assisted RP-RPLC approach for in-depth analysis of human liver phosphoproteome.</title>
        <authorList>
            <person name="Bian Y."/>
            <person name="Song C."/>
            <person name="Cheng K."/>
            <person name="Dong M."/>
            <person name="Wang F."/>
            <person name="Huang J."/>
            <person name="Sun D."/>
            <person name="Wang L."/>
            <person name="Ye M."/>
            <person name="Zou H."/>
        </authorList>
    </citation>
    <scope>IDENTIFICATION BY MASS SPECTROMETRY [LARGE SCALE ANALYSIS]</scope>
    <source>
        <tissue>Liver</tissue>
    </source>
</reference>
<accession>Q96CN4</accession>
<accession>B9A6I9</accession>
<protein>
    <recommendedName>
        <fullName>EVI5-like protein</fullName>
    </recommendedName>
    <alternativeName>
        <fullName>Ecotropic viral integration site 5-like protein</fullName>
    </alternativeName>
</protein>
<feature type="chain" id="PRO_0000263097" description="EVI5-like protein">
    <location>
        <begin position="1"/>
        <end position="794"/>
    </location>
</feature>
<feature type="domain" description="Rab-GAP TBC" evidence="3">
    <location>
        <begin position="115"/>
        <end position="300"/>
    </location>
</feature>
<feature type="region of interest" description="Disordered" evidence="4">
    <location>
        <begin position="1"/>
        <end position="36"/>
    </location>
</feature>
<feature type="region of interest" description="Disordered" evidence="4">
    <location>
        <begin position="49"/>
        <end position="75"/>
    </location>
</feature>
<feature type="region of interest" description="Disordered" evidence="4">
    <location>
        <begin position="766"/>
        <end position="794"/>
    </location>
</feature>
<feature type="coiled-coil region" evidence="2">
    <location>
        <begin position="358"/>
        <end position="449"/>
    </location>
</feature>
<feature type="coiled-coil region" evidence="2">
    <location>
        <begin position="569"/>
        <end position="709"/>
    </location>
</feature>
<feature type="compositionally biased region" description="Polar residues" evidence="4">
    <location>
        <begin position="1"/>
        <end position="30"/>
    </location>
</feature>
<feature type="compositionally biased region" description="Low complexity" evidence="4">
    <location>
        <begin position="55"/>
        <end position="75"/>
    </location>
</feature>
<feature type="site" description="Arginine finger" evidence="1">
    <location>
        <position position="156"/>
    </location>
</feature>
<feature type="site" description="Glutamine finger" evidence="1">
    <location>
        <position position="197"/>
    </location>
</feature>
<feature type="modified residue" description="Phosphoserine" evidence="7">
    <location>
        <position position="685"/>
    </location>
</feature>
<feature type="splice variant" id="VSP_043456" description="In isoform 2." evidence="6">
    <original>K</original>
    <variation>KESAALADRLIQ</variation>
    <location>
        <position position="400"/>
    </location>
</feature>
<gene>
    <name type="primary">EVI5L</name>
</gene>
<sequence>MASPTLSPDSSSQEALSAPTCSPTSDSENLSPDELELLAKLEEQNRLLEADSKSMRSMNGSRRNSGSSLVSSSSASSNLSHLEEDTWILWGRIANEWEEWRRRKEKLLKELIRKGIPHHFRAIVWQLLCSATDMPVKNQYSELLKMSSPCEKLIRRDIARTYPEHEFFKGQDSLGQEVLFNVMKAYSLVDREVGYCQGSAFIVGLLLMQMPEEEAFCVFVRLMQEYRLRELFKPSMAELGLCIYQFEYMLQEQLPDLNTHFRSQSFHTSMYASSWFLTLFLTTFPLPVATRVFDIFMYEGLEIVFRVGLALLQVNQAELMQLDMEGMSQYFQRVIPHQFDSCPDKLVLKAYQVKYNPKKMKRLEKEYAAMKSKEMEEQIEIKRLRTENRLLKQRIETLEKGQVTRAQEAEENYVIKRELAVVRQQCSSAAEDLQKAQSTIRQLQEQQENPRLTEDFVSHLETELEQSRLRETETLGALREMQDKVLDMEKRNSSLPDENNVAQLQEELKALKVREGQAVASTRELKLQLQELSDTWQAHLARGGRWKESPRKLVVGELQDELMSVRLREAQALAEGRELRQRVVELETQDHIHRNLLNRVEAERAALQEKLQYLAAQNKGLQTQLSESRRKQAEAECKSKEEVMAVRLREADSMAAVAEMRQRIAELEIQREEGRIQGQLNHSDSSQYIRELKDQIEELKAEVRLLKGPPPFEDPLAFDGLSLARHLDEDSLPSSDEELLGVGVGAALQDALYPLSPRDARFFRRLERPAKDSEGSSDSDADELAAPYSQGLDN</sequence>
<organism>
    <name type="scientific">Homo sapiens</name>
    <name type="common">Human</name>
    <dbReference type="NCBI Taxonomy" id="9606"/>
    <lineage>
        <taxon>Eukaryota</taxon>
        <taxon>Metazoa</taxon>
        <taxon>Chordata</taxon>
        <taxon>Craniata</taxon>
        <taxon>Vertebrata</taxon>
        <taxon>Euteleostomi</taxon>
        <taxon>Mammalia</taxon>
        <taxon>Eutheria</taxon>
        <taxon>Euarchontoglires</taxon>
        <taxon>Primates</taxon>
        <taxon>Haplorrhini</taxon>
        <taxon>Catarrhini</taxon>
        <taxon>Hominidae</taxon>
        <taxon>Homo</taxon>
    </lineage>
</organism>
<dbReference type="EMBL" id="AB449874">
    <property type="protein sequence ID" value="BAH16617.1"/>
    <property type="molecule type" value="mRNA"/>
</dbReference>
<dbReference type="EMBL" id="AC008812">
    <property type="status" value="NOT_ANNOTATED_CDS"/>
    <property type="molecule type" value="Genomic_DNA"/>
</dbReference>
<dbReference type="EMBL" id="AC010336">
    <property type="status" value="NOT_ANNOTATED_CDS"/>
    <property type="molecule type" value="Genomic_DNA"/>
</dbReference>
<dbReference type="EMBL" id="BC014111">
    <property type="protein sequence ID" value="AAH14111.1"/>
    <property type="molecule type" value="mRNA"/>
</dbReference>
<dbReference type="CCDS" id="CCDS12188.1">
    <molecule id="Q96CN4-1"/>
</dbReference>
<dbReference type="CCDS" id="CCDS54209.1">
    <molecule id="Q96CN4-2"/>
</dbReference>
<dbReference type="RefSeq" id="NP_001153416.1">
    <molecule id="Q96CN4-2"/>
    <property type="nucleotide sequence ID" value="NM_001159944.3"/>
</dbReference>
<dbReference type="RefSeq" id="NP_660288.1">
    <molecule id="Q96CN4-1"/>
    <property type="nucleotide sequence ID" value="NM_145245.5"/>
</dbReference>
<dbReference type="RefSeq" id="XP_005272515.1">
    <property type="nucleotide sequence ID" value="XM_005272458.4"/>
</dbReference>
<dbReference type="RefSeq" id="XP_016881728.1">
    <property type="nucleotide sequence ID" value="XM_017026239.1"/>
</dbReference>
<dbReference type="SMR" id="Q96CN4"/>
<dbReference type="BioGRID" id="125449">
    <property type="interactions" value="69"/>
</dbReference>
<dbReference type="FunCoup" id="Q96CN4">
    <property type="interactions" value="461"/>
</dbReference>
<dbReference type="IntAct" id="Q96CN4">
    <property type="interactions" value="54"/>
</dbReference>
<dbReference type="STRING" id="9606.ENSP00000445905"/>
<dbReference type="iPTMnet" id="Q96CN4"/>
<dbReference type="PhosphoSitePlus" id="Q96CN4"/>
<dbReference type="BioMuta" id="EVI5L"/>
<dbReference type="DMDM" id="74731362"/>
<dbReference type="jPOST" id="Q96CN4"/>
<dbReference type="MassIVE" id="Q96CN4"/>
<dbReference type="PaxDb" id="9606-ENSP00000445905"/>
<dbReference type="PeptideAtlas" id="Q96CN4"/>
<dbReference type="ProteomicsDB" id="76196">
    <molecule id="Q96CN4-1"/>
</dbReference>
<dbReference type="ProteomicsDB" id="76197">
    <molecule id="Q96CN4-2"/>
</dbReference>
<dbReference type="Pumba" id="Q96CN4"/>
<dbReference type="Antibodypedia" id="24676">
    <property type="antibodies" value="77 antibodies from 13 providers"/>
</dbReference>
<dbReference type="DNASU" id="115704"/>
<dbReference type="Ensembl" id="ENST00000270530.8">
    <molecule id="Q96CN4-1"/>
    <property type="protein sequence ID" value="ENSP00000270530.3"/>
    <property type="gene ID" value="ENSG00000142459.9"/>
</dbReference>
<dbReference type="Ensembl" id="ENST00000538904.7">
    <molecule id="Q96CN4-2"/>
    <property type="protein sequence ID" value="ENSP00000445905.1"/>
    <property type="gene ID" value="ENSG00000142459.9"/>
</dbReference>
<dbReference type="GeneID" id="115704"/>
<dbReference type="KEGG" id="hsa:115704"/>
<dbReference type="MANE-Select" id="ENST00000538904.7">
    <molecule id="Q96CN4-2"/>
    <property type="protein sequence ID" value="ENSP00000445905.1"/>
    <property type="RefSeq nucleotide sequence ID" value="NM_001159944.3"/>
    <property type="RefSeq protein sequence ID" value="NP_001153416.1"/>
</dbReference>
<dbReference type="UCSC" id="uc002min.4">
    <molecule id="Q96CN4-1"/>
    <property type="organism name" value="human"/>
</dbReference>
<dbReference type="AGR" id="HGNC:30464"/>
<dbReference type="CTD" id="115704"/>
<dbReference type="DisGeNET" id="115704"/>
<dbReference type="GeneCards" id="EVI5L"/>
<dbReference type="HGNC" id="HGNC:30464">
    <property type="gene designation" value="EVI5L"/>
</dbReference>
<dbReference type="HPA" id="ENSG00000142459">
    <property type="expression patterns" value="Tissue enhanced (brain)"/>
</dbReference>
<dbReference type="neXtProt" id="NX_Q96CN4"/>
<dbReference type="OpenTargets" id="ENSG00000142459"/>
<dbReference type="PharmGKB" id="PA134905968"/>
<dbReference type="VEuPathDB" id="HostDB:ENSG00000142459"/>
<dbReference type="eggNOG" id="KOG4436">
    <property type="taxonomic scope" value="Eukaryota"/>
</dbReference>
<dbReference type="GeneTree" id="ENSGT00940000153846"/>
<dbReference type="HOGENOM" id="CLU_005350_6_0_1"/>
<dbReference type="InParanoid" id="Q96CN4"/>
<dbReference type="OMA" id="SECWTEV"/>
<dbReference type="OrthoDB" id="295078at2759"/>
<dbReference type="PAN-GO" id="Q96CN4">
    <property type="GO annotations" value="2 GO annotations based on evolutionary models"/>
</dbReference>
<dbReference type="PhylomeDB" id="Q96CN4"/>
<dbReference type="TreeFam" id="TF317184"/>
<dbReference type="PathwayCommons" id="Q96CN4"/>
<dbReference type="SignaLink" id="Q96CN4"/>
<dbReference type="BioGRID-ORCS" id="115704">
    <property type="hits" value="9 hits in 1153 CRISPR screens"/>
</dbReference>
<dbReference type="ChiTaRS" id="EVI5L">
    <property type="organism name" value="human"/>
</dbReference>
<dbReference type="GenomeRNAi" id="115704"/>
<dbReference type="Pharos" id="Q96CN4">
    <property type="development level" value="Tbio"/>
</dbReference>
<dbReference type="PRO" id="PR:Q96CN4"/>
<dbReference type="Proteomes" id="UP000005640">
    <property type="component" value="Chromosome 19"/>
</dbReference>
<dbReference type="RNAct" id="Q96CN4">
    <property type="molecule type" value="protein"/>
</dbReference>
<dbReference type="Bgee" id="ENSG00000142459">
    <property type="expression patterns" value="Expressed in prefrontal cortex and 164 other cell types or tissues"/>
</dbReference>
<dbReference type="ExpressionAtlas" id="Q96CN4">
    <property type="expression patterns" value="baseline and differential"/>
</dbReference>
<dbReference type="GO" id="GO:0005096">
    <property type="term" value="F:GTPase activator activity"/>
    <property type="evidence" value="ECO:0000314"/>
    <property type="project" value="UniProtKB"/>
</dbReference>
<dbReference type="GO" id="GO:0031267">
    <property type="term" value="F:small GTPase binding"/>
    <property type="evidence" value="ECO:0000353"/>
    <property type="project" value="UniProtKB"/>
</dbReference>
<dbReference type="GO" id="GO:1902018">
    <property type="term" value="P:negative regulation of cilium assembly"/>
    <property type="evidence" value="ECO:0000315"/>
    <property type="project" value="UniProtKB"/>
</dbReference>
<dbReference type="GO" id="GO:0043547">
    <property type="term" value="P:positive regulation of GTPase activity"/>
    <property type="evidence" value="ECO:0000314"/>
    <property type="project" value="UniProtKB"/>
</dbReference>
<dbReference type="FunFam" id="1.10.10.750:FF:000002">
    <property type="entry name" value="Ecotropic viral integration site 5"/>
    <property type="match status" value="1"/>
</dbReference>
<dbReference type="FunFam" id="1.10.472.80:FF:000002">
    <property type="entry name" value="Ecotropic viral integration site 5"/>
    <property type="match status" value="1"/>
</dbReference>
<dbReference type="FunFam" id="1.10.8.270:FF:000003">
    <property type="entry name" value="Ecotropic viral integration site 5"/>
    <property type="match status" value="1"/>
</dbReference>
<dbReference type="Gene3D" id="1.10.8.270">
    <property type="entry name" value="putative rabgap domain of human tbc1 domain family member 14 like domains"/>
    <property type="match status" value="1"/>
</dbReference>
<dbReference type="Gene3D" id="1.10.10.750">
    <property type="entry name" value="Ypt/Rab-GAP domain of gyp1p, domain 1"/>
    <property type="match status" value="1"/>
</dbReference>
<dbReference type="Gene3D" id="1.10.472.80">
    <property type="entry name" value="Ypt/Rab-GAP domain of gyp1p, domain 3"/>
    <property type="match status" value="1"/>
</dbReference>
<dbReference type="InterPro" id="IPR000195">
    <property type="entry name" value="Rab-GAP-TBC_dom"/>
</dbReference>
<dbReference type="InterPro" id="IPR035969">
    <property type="entry name" value="Rab-GAP_TBC_sf"/>
</dbReference>
<dbReference type="InterPro" id="IPR050302">
    <property type="entry name" value="Rab_GAP_TBC_domain"/>
</dbReference>
<dbReference type="PANTHER" id="PTHR47219:SF12">
    <property type="entry name" value="ECOTROPIC VIRAL INTEGRATION SITE 5 LIKE"/>
    <property type="match status" value="1"/>
</dbReference>
<dbReference type="PANTHER" id="PTHR47219">
    <property type="entry name" value="RAB GTPASE-ACTIVATING PROTEIN 1-LIKE"/>
    <property type="match status" value="1"/>
</dbReference>
<dbReference type="Pfam" id="PF00566">
    <property type="entry name" value="RabGAP-TBC"/>
    <property type="match status" value="1"/>
</dbReference>
<dbReference type="SMART" id="SM00164">
    <property type="entry name" value="TBC"/>
    <property type="match status" value="1"/>
</dbReference>
<dbReference type="SUPFAM" id="SSF47923">
    <property type="entry name" value="Ypt/Rab-GAP domain of gyp1p"/>
    <property type="match status" value="2"/>
</dbReference>
<dbReference type="PROSITE" id="PS50086">
    <property type="entry name" value="TBC_RABGAP"/>
    <property type="match status" value="1"/>
</dbReference>